<name>VLTF3_MONPV</name>
<evidence type="ECO:0000250" key="1">
    <source>
        <dbReference type="UniProtKB" id="P68319"/>
    </source>
</evidence>
<evidence type="ECO:0000305" key="2"/>
<sequence length="224" mass="26335">MNLRLCSCCRHNGIVSEQGYEYCIFCESVFQKCTKVQKKSNFHVSNKLIHLRNVLRRLLSHQCSGEIISELLDIMEKNQISTDDVDANFVSSFLKANERINKKDYKLVFEIINQVKDEKLNLSTEKINEVVEIFKHLVFFCQENTPSKTINYSFFLDKIFDITSVTKNLKPQTVKNYTKNNSNQLVWENFLAHMRSKKRVTMVEDYGHEYVFVDERFSTCSLEV</sequence>
<dbReference type="EMBL" id="KC257461">
    <property type="protein sequence ID" value="AGF37016.1"/>
    <property type="molecule type" value="Genomic_DNA"/>
</dbReference>
<dbReference type="EMBL" id="MT903340">
    <property type="protein sequence ID" value="QNP12982.1"/>
    <property type="molecule type" value="Genomic_DNA"/>
</dbReference>
<dbReference type="RefSeq" id="YP_010377109.1">
    <property type="nucleotide sequence ID" value="NC_063383.1"/>
</dbReference>
<dbReference type="GeneID" id="72551522"/>
<dbReference type="Proteomes" id="UP000516359">
    <property type="component" value="Genome"/>
</dbReference>
<dbReference type="GO" id="GO:0046782">
    <property type="term" value="P:regulation of viral transcription"/>
    <property type="evidence" value="ECO:0007669"/>
    <property type="project" value="InterPro"/>
</dbReference>
<dbReference type="InterPro" id="IPR007031">
    <property type="entry name" value="Poxvirus_VLTF3"/>
</dbReference>
<dbReference type="InterPro" id="IPR014900">
    <property type="entry name" value="VLTF-3_Zn_ribbon"/>
</dbReference>
<dbReference type="Pfam" id="PF08792">
    <property type="entry name" value="A2L_zn_ribbon"/>
    <property type="match status" value="1"/>
</dbReference>
<dbReference type="Pfam" id="PF04947">
    <property type="entry name" value="Pox_VLTF3"/>
    <property type="match status" value="1"/>
</dbReference>
<gene>
    <name type="primary">OPG127</name>
    <name type="synonym">VLTF3</name>
    <name type="ORF">MPXVgp112</name>
</gene>
<comment type="function">
    <text evidence="1">Acts with RNA polymerase to initiate transcription from late gene promoters.</text>
</comment>
<comment type="subunit">
    <text evidence="1">Interacts with the late transcription elongation factor VLTF-4/OPG110. Interacts with the late transcription factors VLTF-1/OPG093.</text>
</comment>
<comment type="developmental stage">
    <text>Intermediate stages of infection.</text>
</comment>
<comment type="similarity">
    <text evidence="2">Belongs to the orthopoxvirus VLTF-3/OPG127 family.</text>
</comment>
<organism>
    <name type="scientific">Monkeypox virus</name>
    <dbReference type="NCBI Taxonomy" id="10244"/>
    <lineage>
        <taxon>Viruses</taxon>
        <taxon>Varidnaviria</taxon>
        <taxon>Bamfordvirae</taxon>
        <taxon>Nucleocytoviricota</taxon>
        <taxon>Pokkesviricetes</taxon>
        <taxon>Chitovirales</taxon>
        <taxon>Poxviridae</taxon>
        <taxon>Chordopoxvirinae</taxon>
        <taxon>Orthopoxvirus</taxon>
    </lineage>
</organism>
<keyword id="KW-0010">Activator</keyword>
<keyword id="KW-0426">Late protein</keyword>
<keyword id="KW-1185">Reference proteome</keyword>
<keyword id="KW-0804">Transcription</keyword>
<keyword id="KW-0805">Transcription regulation</keyword>
<proteinExistence type="evidence at transcript level"/>
<organismHost>
    <name type="scientific">Cynomys gunnisoni</name>
    <name type="common">Gunnison's prairie dog</name>
    <name type="synonym">Spermophilus gunnisoni</name>
    <dbReference type="NCBI Taxonomy" id="45479"/>
</organismHost>
<organismHost>
    <name type="scientific">Cynomys leucurus</name>
    <name type="common">White-tailed prairie dog</name>
    <dbReference type="NCBI Taxonomy" id="99825"/>
</organismHost>
<organismHost>
    <name type="scientific">Cynomys ludovicianus</name>
    <name type="common">Black-tailed prairie dog</name>
    <dbReference type="NCBI Taxonomy" id="45480"/>
</organismHost>
<organismHost>
    <name type="scientific">Cynomys mexicanus</name>
    <name type="common">Mexican prairie dog</name>
    <dbReference type="NCBI Taxonomy" id="99826"/>
</organismHost>
<organismHost>
    <name type="scientific">Cynomys parvidens</name>
    <name type="common">Utah prairie dog</name>
    <dbReference type="NCBI Taxonomy" id="99827"/>
</organismHost>
<organismHost>
    <name type="scientific">Gliridae</name>
    <name type="common">dormice</name>
    <dbReference type="NCBI Taxonomy" id="30650"/>
</organismHost>
<organismHost>
    <name type="scientific">Heliosciurus ruwenzorii</name>
    <name type="common">Ruwenzori sun squirrel</name>
    <dbReference type="NCBI Taxonomy" id="226685"/>
</organismHost>
<organismHost>
    <name type="scientific">Homo sapiens</name>
    <name type="common">Human</name>
    <dbReference type="NCBI Taxonomy" id="9606"/>
</organismHost>
<organismHost>
    <name type="scientific">Mus musculus</name>
    <name type="common">Mouse</name>
    <dbReference type="NCBI Taxonomy" id="10090"/>
</organismHost>
<feature type="chain" id="PRO_0000457514" description="Viral late gene transcription factor 3">
    <location>
        <begin position="1"/>
        <end position="224"/>
    </location>
</feature>
<reference key="1">
    <citation type="journal article" date="2013" name="Am. J. Trop. Med. Hyg.">
        <title>Detection of human monkeypox in the republic of the congo following intensive community education.</title>
        <authorList>
            <person name="Reynolds M.G."/>
            <person name="Emerson G.L."/>
            <person name="Pukuta E."/>
            <person name="Karhemere S."/>
            <person name="Muyembe J.J."/>
            <person name="Bikindou A."/>
            <person name="McCollum A.M."/>
            <person name="Moses C."/>
            <person name="Wilkins K."/>
            <person name="Zhao H."/>
            <person name="Damon I.K."/>
            <person name="Karem K.L."/>
            <person name="Li Y."/>
            <person name="Carroll D.S."/>
            <person name="Mombouli J.V."/>
        </authorList>
    </citation>
    <scope>NUCLEOTIDE SEQUENCE [GENOMIC DNA]</scope>
    <source>
        <strain>ROC2010</strain>
    </source>
</reference>
<reference key="2">
    <citation type="journal article" date="2022" name="J. Infect. Dis.">
        <title>Exportation of Monkeypox virus from the African continent.</title>
        <authorList>
            <person name="Mauldin M.R."/>
            <person name="McCollum A.M."/>
            <person name="Nakazawa Y.J."/>
            <person name="Mandra A."/>
            <person name="Whitehouse E.R."/>
            <person name="Davidson W."/>
            <person name="Zhao H."/>
            <person name="Gao J."/>
            <person name="Li Y."/>
            <person name="Doty J."/>
            <person name="Yinka-Ogunleye A."/>
            <person name="Akinpelu A."/>
            <person name="Aruna O."/>
            <person name="Naidoo D."/>
            <person name="Lewandowski K."/>
            <person name="Afrough B."/>
            <person name="Graham V."/>
            <person name="Aarons E."/>
            <person name="Hewson R."/>
            <person name="Vipond R."/>
            <person name="Dunning J."/>
            <person name="Chand M."/>
            <person name="Brown C."/>
            <person name="Cohen-Gihon I."/>
            <person name="Erez N."/>
            <person name="Shifman O."/>
            <person name="Israeli O."/>
            <person name="Sharon M."/>
            <person name="Schwartz E."/>
            <person name="Beth-Din A."/>
            <person name="Zvi A."/>
            <person name="Mak T.M."/>
            <person name="Ng Y.K."/>
            <person name="Cui L."/>
            <person name="Lin R.T.P."/>
            <person name="Olson V.A."/>
            <person name="Brooks T."/>
            <person name="Paran N."/>
            <person name="Ihekweazu C."/>
            <person name="Reynolds M.G."/>
        </authorList>
    </citation>
    <scope>NUCLEOTIDE SEQUENCE [LARGE SCALE GENOMIC DNA]</scope>
    <source>
        <strain>MPXV-M5312_HM12_Rivers</strain>
    </source>
</reference>
<accession>A0A7H0DN99</accession>
<protein>
    <recommendedName>
        <fullName>Viral late gene transcription factor 3</fullName>
    </recommendedName>
    <alternativeName>
        <fullName>Trans-activator protein A2</fullName>
    </alternativeName>
</protein>